<accession>P23626</accession>
<dbReference type="EMBL" id="D01015">
    <property type="protein sequence ID" value="BAA00819.1"/>
    <property type="molecule type" value="Genomic_RNA"/>
</dbReference>
<dbReference type="PIR" id="A54334">
    <property type="entry name" value="JQ0927"/>
</dbReference>
<dbReference type="Proteomes" id="UP000007399">
    <property type="component" value="Genome"/>
</dbReference>
<dbReference type="GO" id="GO:0044219">
    <property type="term" value="C:host cell plasmodesma"/>
    <property type="evidence" value="ECO:0007669"/>
    <property type="project" value="UniProtKB-SubCell"/>
</dbReference>
<dbReference type="GO" id="GO:0046740">
    <property type="term" value="P:transport of virus in host, cell to cell"/>
    <property type="evidence" value="ECO:0007669"/>
    <property type="project" value="UniProtKB-KW"/>
</dbReference>
<dbReference type="InterPro" id="IPR000603">
    <property type="entry name" value="MPV"/>
</dbReference>
<dbReference type="Pfam" id="PF00803">
    <property type="entry name" value="3A"/>
    <property type="match status" value="1"/>
</dbReference>
<comment type="function">
    <text evidence="1">Transports viral genome to neighboring plant cells directly through plasmosdesmata, without any budding. The movement protein allows efficient cell to cell propagation, by bypassing the host cell wall barrier. Acts by forming a tubular structure at the host plasmodesmata, enlarging it enough to allow free passage of virion capsids (By similarity).</text>
</comment>
<comment type="subcellular location">
    <subcellularLocation>
        <location evidence="1">Host cell junction</location>
        <location evidence="1">Host plasmodesma</location>
    </subcellularLocation>
    <text evidence="1">Assembles into long tubular structures at the surface of the infected protoplast.</text>
</comment>
<comment type="similarity">
    <text evidence="2">Belongs to the cucumovirus movement protein family.</text>
</comment>
<keyword id="KW-1031">Host cell junction</keyword>
<keyword id="KW-1185">Reference proteome</keyword>
<keyword id="KW-0813">Transport</keyword>
<keyword id="KW-0916">Viral movement protein</keyword>
<organismHost>
    <name type="scientific">Canna</name>
    <dbReference type="NCBI Taxonomy" id="4627"/>
</organismHost>
<organismHost>
    <name type="scientific">Chrysanthemum morifolium</name>
    <name type="common">Florist's daisy</name>
    <name type="synonym">Dendranthema grandiflorum</name>
    <dbReference type="NCBI Taxonomy" id="41568"/>
</organismHost>
<organismHost>
    <name type="scientific">Lilium</name>
    <dbReference type="NCBI Taxonomy" id="4688"/>
</organismHost>
<organismHost>
    <name type="scientific">Solanum lycopersicum</name>
    <name type="common">Tomato</name>
    <name type="synonym">Lycopersicon esculentum</name>
    <dbReference type="NCBI Taxonomy" id="4081"/>
</organismHost>
<sequence>MAFSGTSRTLTQQSSAASTDELHNILFSRRAIQEMATKCDLGRHHWMRADNAVCVRPLVPETTSNLLTRWFVSGYEAGELPSKGYMSVPQVLCAVTRTVTSDAEGSLRIYLADLGDKERAPIDAQVVSLHNRDLPAIVSFHPTYDCPMEQLNGVGRCFALVIERCGYIGHNGTTASVCSNWQPKFSSKNNNYKPAAAGKTLVLPYDRLSELSGPSAVARLLKSQLNMSASRIQLPGYVFNVRYVVSLRILRNRQSQPNARVDSEPQVFSKPVVVNGI</sequence>
<feature type="chain" id="PRO_0000083252" description="Movement protein">
    <location>
        <begin position="1"/>
        <end position="277"/>
    </location>
</feature>
<gene>
    <name type="ORF">ORF3a</name>
</gene>
<proteinExistence type="inferred from homology"/>
<evidence type="ECO:0000250" key="1"/>
<evidence type="ECO:0000305" key="2"/>
<reference key="1">
    <citation type="journal article" date="1991" name="J. Gen. Virol.">
        <title>Tomato aspermy virus has an evolutionary relationship with other tripartite RNA plant viruses.</title>
        <authorList>
            <person name="O'Reilly D."/>
            <person name="Thomas C.J.R."/>
            <person name="Coutts R.H.A."/>
        </authorList>
    </citation>
    <scope>NUCLEOTIDE SEQUENCE [GENOMIC RNA]</scope>
    <source>
        <strain>Chrysanthemum isolate</strain>
    </source>
</reference>
<name>MVP_TAV</name>
<organism>
    <name type="scientific">Tomato aspermy virus</name>
    <name type="common">TAV</name>
    <dbReference type="NCBI Taxonomy" id="12315"/>
    <lineage>
        <taxon>Viruses</taxon>
        <taxon>Riboviria</taxon>
        <taxon>Orthornavirae</taxon>
        <taxon>Kitrinoviricota</taxon>
        <taxon>Alsuviricetes</taxon>
        <taxon>Martellivirales</taxon>
        <taxon>Bromoviridae</taxon>
        <taxon>Cucumovirus</taxon>
    </lineage>
</organism>
<protein>
    <recommendedName>
        <fullName>Movement protein</fullName>
        <shortName>MP</shortName>
    </recommendedName>
    <alternativeName>
        <fullName>Protein 3A</fullName>
    </alternativeName>
</protein>